<evidence type="ECO:0000255" key="1">
    <source>
        <dbReference type="HAMAP-Rule" id="MF_01830"/>
    </source>
</evidence>
<reference key="1">
    <citation type="journal article" date="2008" name="Genome Res.">
        <title>Genome sequence of the beta-rhizobium Cupriavidus taiwanensis and comparative genomics of rhizobia.</title>
        <authorList>
            <person name="Amadou C."/>
            <person name="Pascal G."/>
            <person name="Mangenot S."/>
            <person name="Glew M."/>
            <person name="Bontemps C."/>
            <person name="Capela D."/>
            <person name="Carrere S."/>
            <person name="Cruveiller S."/>
            <person name="Dossat C."/>
            <person name="Lajus A."/>
            <person name="Marchetti M."/>
            <person name="Poinsot V."/>
            <person name="Rouy Z."/>
            <person name="Servin B."/>
            <person name="Saad M."/>
            <person name="Schenowitz C."/>
            <person name="Barbe V."/>
            <person name="Batut J."/>
            <person name="Medigue C."/>
            <person name="Masson-Boivin C."/>
        </authorList>
    </citation>
    <scope>NUCLEOTIDE SEQUENCE [LARGE SCALE GENOMIC DNA]</scope>
    <source>
        <strain>DSM 17343 / BCRC 17206 / CCUG 44338 / CIP 107171 / LMG 19424 / R1</strain>
    </source>
</reference>
<dbReference type="EC" id="4.2.1.-" evidence="1"/>
<dbReference type="EMBL" id="CU633750">
    <property type="protein sequence ID" value="CAQ71846.1"/>
    <property type="molecule type" value="Genomic_DNA"/>
</dbReference>
<dbReference type="RefSeq" id="WP_012356064.1">
    <property type="nucleotide sequence ID" value="NC_010530.1"/>
</dbReference>
<dbReference type="SMR" id="B3RAC1"/>
<dbReference type="GeneID" id="29763904"/>
<dbReference type="KEGG" id="cti:RALTA_B1245"/>
<dbReference type="eggNOG" id="COG4336">
    <property type="taxonomic scope" value="Bacteria"/>
</dbReference>
<dbReference type="HOGENOM" id="CLU_059759_0_0_4"/>
<dbReference type="BioCyc" id="CTAI977880:RALTA_RS21620-MONOMER"/>
<dbReference type="Proteomes" id="UP000001692">
    <property type="component" value="Chromosome 2"/>
</dbReference>
<dbReference type="GO" id="GO:0016829">
    <property type="term" value="F:lyase activity"/>
    <property type="evidence" value="ECO:0007669"/>
    <property type="project" value="UniProtKB-KW"/>
</dbReference>
<dbReference type="FunFam" id="3.30.2040.10:FF:000001">
    <property type="entry name" value="D-glutamate cyclase, mitochondrial"/>
    <property type="match status" value="1"/>
</dbReference>
<dbReference type="Gene3D" id="3.40.1640.10">
    <property type="entry name" value="PSTPO5379-like"/>
    <property type="match status" value="1"/>
</dbReference>
<dbReference type="Gene3D" id="3.30.2040.10">
    <property type="entry name" value="PSTPO5379-like domain"/>
    <property type="match status" value="1"/>
</dbReference>
<dbReference type="HAMAP" id="MF_01830">
    <property type="entry name" value="Hydro_lyase"/>
    <property type="match status" value="1"/>
</dbReference>
<dbReference type="InterPro" id="IPR009906">
    <property type="entry name" value="D-Glu_cyclase"/>
</dbReference>
<dbReference type="InterPro" id="IPR038021">
    <property type="entry name" value="Putative_hydro-lyase"/>
</dbReference>
<dbReference type="InterPro" id="IPR016938">
    <property type="entry name" value="UPF0317"/>
</dbReference>
<dbReference type="NCBIfam" id="NF003969">
    <property type="entry name" value="PRK05463.1"/>
    <property type="match status" value="1"/>
</dbReference>
<dbReference type="PANTHER" id="PTHR32022">
    <property type="entry name" value="D-GLUTAMATE CYCLASE, MITOCHONDRIAL"/>
    <property type="match status" value="1"/>
</dbReference>
<dbReference type="PANTHER" id="PTHR32022:SF10">
    <property type="entry name" value="D-GLUTAMATE CYCLASE, MITOCHONDRIAL"/>
    <property type="match status" value="1"/>
</dbReference>
<dbReference type="Pfam" id="PF07286">
    <property type="entry name" value="D-Glu_cyclase"/>
    <property type="match status" value="1"/>
</dbReference>
<dbReference type="PIRSF" id="PIRSF029755">
    <property type="entry name" value="UCP029755"/>
    <property type="match status" value="1"/>
</dbReference>
<dbReference type="SUPFAM" id="SSF160920">
    <property type="entry name" value="PSTPO5379-like"/>
    <property type="match status" value="1"/>
</dbReference>
<feature type="chain" id="PRO_0000379835" description="Putative hydro-lyase RALTA_B1245">
    <location>
        <begin position="1"/>
        <end position="267"/>
    </location>
</feature>
<comment type="similarity">
    <text evidence="1">Belongs to the D-glutamate cyclase family.</text>
</comment>
<sequence>MNQPLQHAASLLPEDPAALRQLIRAGRYRGHTSGLARGHVQANIVILTRDWAYDFLQFCALNRKACPLIDVTDPGDPVFRNLGRDVDIRTDVPMYRVYRDGNAYHETTGITELWRDDFVAFAIGCSFSFEQALLAANVPLKHINLGRNVAMYRTAIETRPAGRLSGKLVVSMRPLKAADAILATEITARYPDVHGAPVHIGDPRLIGIEDIESPDYGDAVPLDADEIPVFWACGVTPQAVIREARPEICITHAPGCMLVTDLDNNRL</sequence>
<gene>
    <name type="ordered locus">RALTA_B1245</name>
</gene>
<proteinExistence type="inferred from homology"/>
<organism>
    <name type="scientific">Cupriavidus taiwanensis (strain DSM 17343 / BCRC 17206 / CCUG 44338 / CIP 107171 / LMG 19424 / R1)</name>
    <name type="common">Ralstonia taiwanensis (strain LMG 19424)</name>
    <dbReference type="NCBI Taxonomy" id="977880"/>
    <lineage>
        <taxon>Bacteria</taxon>
        <taxon>Pseudomonadati</taxon>
        <taxon>Pseudomonadota</taxon>
        <taxon>Betaproteobacteria</taxon>
        <taxon>Burkholderiales</taxon>
        <taxon>Burkholderiaceae</taxon>
        <taxon>Cupriavidus</taxon>
    </lineage>
</organism>
<keyword id="KW-0456">Lyase</keyword>
<name>Y6345_CUPTR</name>
<accession>B3RAC1</accession>
<protein>
    <recommendedName>
        <fullName evidence="1">Putative hydro-lyase RALTA_B1245</fullName>
        <ecNumber evidence="1">4.2.1.-</ecNumber>
    </recommendedName>
</protein>